<protein>
    <recommendedName>
        <fullName>Ammonium transporter Rh type B</fullName>
    </recommendedName>
    <alternativeName>
        <fullName>Rhesus blood group family type B glycoprotein</fullName>
        <shortName>Rh family type B glycoprotein</shortName>
        <shortName>Rh type B glycoprotein</shortName>
    </alternativeName>
</protein>
<keyword id="KW-0924">Ammonia transport</keyword>
<keyword id="KW-1003">Cell membrane</keyword>
<keyword id="KW-0968">Cytoplasmic vesicle</keyword>
<keyword id="KW-0325">Glycoprotein</keyword>
<keyword id="KW-0472">Membrane</keyword>
<keyword id="KW-1185">Reference proteome</keyword>
<keyword id="KW-0812">Transmembrane</keyword>
<keyword id="KW-1133">Transmembrane helix</keyword>
<keyword id="KW-0813">Transport</keyword>
<feature type="chain" id="PRO_0000283609" description="Ammonium transporter Rh type B">
    <location>
        <begin position="1"/>
        <end position="451"/>
    </location>
</feature>
<feature type="topological domain" description="Cytoplasmic" evidence="2">
    <location>
        <begin position="1"/>
        <end position="11"/>
    </location>
</feature>
<feature type="transmembrane region" description="Helical" evidence="2">
    <location>
        <begin position="12"/>
        <end position="32"/>
    </location>
</feature>
<feature type="topological domain" description="Extracellular" evidence="2">
    <location>
        <begin position="33"/>
        <end position="63"/>
    </location>
</feature>
<feature type="transmembrane region" description="Helical" evidence="2">
    <location>
        <begin position="64"/>
        <end position="84"/>
    </location>
</feature>
<feature type="topological domain" description="Cytoplasmic" evidence="2">
    <location>
        <begin position="85"/>
        <end position="87"/>
    </location>
</feature>
<feature type="transmembrane region" description="Helical" evidence="2">
    <location>
        <begin position="88"/>
        <end position="108"/>
    </location>
</feature>
<feature type="topological domain" description="Extracellular" evidence="2">
    <location>
        <begin position="109"/>
        <end position="121"/>
    </location>
</feature>
<feature type="transmembrane region" description="Helical" evidence="2">
    <location>
        <begin position="122"/>
        <end position="142"/>
    </location>
</feature>
<feature type="topological domain" description="Cytoplasmic" evidence="2">
    <location>
        <begin position="143"/>
        <end position="151"/>
    </location>
</feature>
<feature type="transmembrane region" description="Helical" evidence="2">
    <location>
        <begin position="152"/>
        <end position="172"/>
    </location>
</feature>
<feature type="topological domain" description="Extracellular" evidence="2">
    <location>
        <begin position="173"/>
        <end position="176"/>
    </location>
</feature>
<feature type="transmembrane region" description="Helical" evidence="2">
    <location>
        <begin position="177"/>
        <end position="197"/>
    </location>
</feature>
<feature type="topological domain" description="Cytoplasmic" evidence="2">
    <location>
        <begin position="198"/>
        <end position="216"/>
    </location>
</feature>
<feature type="transmembrane region" description="Helical" evidence="2">
    <location>
        <begin position="217"/>
        <end position="237"/>
    </location>
</feature>
<feature type="topological domain" description="Extracellular" evidence="2">
    <location>
        <begin position="238"/>
        <end position="247"/>
    </location>
</feature>
<feature type="transmembrane region" description="Helical" evidence="2">
    <location>
        <begin position="248"/>
        <end position="270"/>
    </location>
</feature>
<feature type="topological domain" description="Cytoplasmic" evidence="2">
    <location>
        <begin position="271"/>
        <end position="274"/>
    </location>
</feature>
<feature type="transmembrane region" description="Helical" evidence="2">
    <location>
        <begin position="275"/>
        <end position="295"/>
    </location>
</feature>
<feature type="topological domain" description="Extracellular" evidence="2">
    <location>
        <begin position="296"/>
        <end position="298"/>
    </location>
</feature>
<feature type="transmembrane region" description="Helical" evidence="2">
    <location>
        <begin position="299"/>
        <end position="319"/>
    </location>
</feature>
<feature type="topological domain" description="Cytoplasmic" evidence="2">
    <location>
        <begin position="320"/>
        <end position="340"/>
    </location>
</feature>
<feature type="transmembrane region" description="Helical" evidence="2">
    <location>
        <begin position="341"/>
        <end position="361"/>
    </location>
</feature>
<feature type="topological domain" description="Extracellular" evidence="2">
    <location>
        <begin position="362"/>
        <end position="390"/>
    </location>
</feature>
<feature type="transmembrane region" description="Helical" evidence="2">
    <location>
        <begin position="391"/>
        <end position="411"/>
    </location>
</feature>
<feature type="topological domain" description="Cytoplasmic" evidence="2">
    <location>
        <begin position="412"/>
        <end position="451"/>
    </location>
</feature>
<feature type="glycosylation site" description="N-linked (GlcNAc...) asparagine" evidence="2">
    <location>
        <position position="44"/>
    </location>
</feature>
<reference key="1">
    <citation type="journal article" date="2005" name="Proc. Natl. Acad. Sci. U.S.A.">
        <title>Evolutionary conservation and diversification of Rh family genes and proteins.</title>
        <authorList>
            <person name="Huang C.-H."/>
            <person name="Peng J."/>
        </authorList>
    </citation>
    <scope>NUCLEOTIDE SEQUENCE [MRNA]</scope>
</reference>
<reference key="2">
    <citation type="journal article" date="2004" name="Nature">
        <title>Genome duplication in the teleost fish Tetraodon nigroviridis reveals the early vertebrate proto-karyotype.</title>
        <authorList>
            <person name="Jaillon O."/>
            <person name="Aury J.-M."/>
            <person name="Brunet F."/>
            <person name="Petit J.-L."/>
            <person name="Stange-Thomann N."/>
            <person name="Mauceli E."/>
            <person name="Bouneau L."/>
            <person name="Fischer C."/>
            <person name="Ozouf-Costaz C."/>
            <person name="Bernot A."/>
            <person name="Nicaud S."/>
            <person name="Jaffe D."/>
            <person name="Fisher S."/>
            <person name="Lutfalla G."/>
            <person name="Dossat C."/>
            <person name="Segurens B."/>
            <person name="Dasilva C."/>
            <person name="Salanoubat M."/>
            <person name="Levy M."/>
            <person name="Boudet N."/>
            <person name="Castellano S."/>
            <person name="Anthouard V."/>
            <person name="Jubin C."/>
            <person name="Castelli V."/>
            <person name="Katinka M."/>
            <person name="Vacherie B."/>
            <person name="Biemont C."/>
            <person name="Skalli Z."/>
            <person name="Cattolico L."/>
            <person name="Poulain J."/>
            <person name="De Berardinis V."/>
            <person name="Cruaud C."/>
            <person name="Duprat S."/>
            <person name="Brottier P."/>
            <person name="Coutanceau J.-P."/>
            <person name="Gouzy J."/>
            <person name="Parra G."/>
            <person name="Lardier G."/>
            <person name="Chapple C."/>
            <person name="McKernan K.J."/>
            <person name="McEwan P."/>
            <person name="Bosak S."/>
            <person name="Kellis M."/>
            <person name="Volff J.-N."/>
            <person name="Guigo R."/>
            <person name="Zody M.C."/>
            <person name="Mesirov J."/>
            <person name="Lindblad-Toh K."/>
            <person name="Birren B."/>
            <person name="Nusbaum C."/>
            <person name="Kahn D."/>
            <person name="Robinson-Rechavi M."/>
            <person name="Laudet V."/>
            <person name="Schachter V."/>
            <person name="Quetier F."/>
            <person name="Saurin W."/>
            <person name="Scarpelli C."/>
            <person name="Wincker P."/>
            <person name="Lander E.S."/>
            <person name="Weissenbach J."/>
            <person name="Roest Crollius H."/>
        </authorList>
    </citation>
    <scope>NUCLEOTIDE SEQUENCE [LARGE SCALE GENOMIC DNA]</scope>
</reference>
<sequence>MADVSTSMRLKLPVVCFILEIILIILFGALVQYDYETDAKEWHNQSHNDYENDFYFRYPSFQDVHVMIFIGFGFLMTFLQKYGFGSVGFNFLIAAFSLQWATLMQGFFHGMHGGKIHVGVESMINADFCTGSVLISFGAVLGKTSPIQLLTMAMFEVTLFAVNEFILLSLLGTRDAGGSMTIHTFGAYFGLMVTRILYRPHLDKSKHRNSSVYHSDLFAMIGTIYLWMFWPSFNSAITAHGDDQHRTALNTYYSLAACTLATYGMSAVTSHDGKLDMVHIQNAALAGGVAVGTAGEMMLTPFGSMIVGFLAGIISVLGFKFLSPILESKLKIQDTCGVHNLHGMPGVLGAIVGAVTAALATMDVYGKGMEDVFPAVADGSIDASKQGGVQALSLAITLGIALLGGLIVVFGTPPDTLCFEDGVYWEVPESEAPHEAQLTTVRTEETEKLSS</sequence>
<evidence type="ECO:0000250" key="1"/>
<evidence type="ECO:0000255" key="2"/>
<evidence type="ECO:0000305" key="3"/>
<proteinExistence type="evidence at transcript level"/>
<comment type="function">
    <text evidence="1">Functions as an ammonia transporter. May play a role in the elimination of ammonia in the gill (By similarity).</text>
</comment>
<comment type="subcellular location">
    <subcellularLocation>
        <location evidence="1">Basolateral cell membrane</location>
        <topology evidence="1">Multi-pass membrane protein</topology>
    </subcellularLocation>
    <subcellularLocation>
        <location evidence="1">Cytoplasmic vesicle membrane</location>
        <topology evidence="1">Multi-pass membrane protein</topology>
    </subcellularLocation>
</comment>
<comment type="similarity">
    <text evidence="3">Belongs to the ammonium transporter (TC 2.A.49) family. Rh subfamily.</text>
</comment>
<comment type="sequence caution" evidence="3">
    <conflict type="erroneous gene model prediction">
        <sequence resource="EMBL-CDS" id="CAG04561"/>
    </conflict>
</comment>
<name>RHBG_TETNG</name>
<organism>
    <name type="scientific">Tetraodon nigroviridis</name>
    <name type="common">Spotted green pufferfish</name>
    <name type="synonym">Chelonodon nigroviridis</name>
    <dbReference type="NCBI Taxonomy" id="99883"/>
    <lineage>
        <taxon>Eukaryota</taxon>
        <taxon>Metazoa</taxon>
        <taxon>Chordata</taxon>
        <taxon>Craniata</taxon>
        <taxon>Vertebrata</taxon>
        <taxon>Euteleostomi</taxon>
        <taxon>Actinopterygii</taxon>
        <taxon>Neopterygii</taxon>
        <taxon>Teleostei</taxon>
        <taxon>Neoteleostei</taxon>
        <taxon>Acanthomorphata</taxon>
        <taxon>Eupercaria</taxon>
        <taxon>Tetraodontiformes</taxon>
        <taxon>Tetradontoidea</taxon>
        <taxon>Tetraodontidae</taxon>
        <taxon>Tetraodon</taxon>
    </lineage>
</organism>
<dbReference type="EMBL" id="AY865614">
    <property type="protein sequence ID" value="AAY41906.1"/>
    <property type="molecule type" value="mRNA"/>
</dbReference>
<dbReference type="EMBL" id="CAAE01014743">
    <property type="protein sequence ID" value="CAG04561.1"/>
    <property type="status" value="ALT_SEQ"/>
    <property type="molecule type" value="Genomic_DNA"/>
</dbReference>
<dbReference type="SMR" id="Q3BBX8"/>
<dbReference type="FunCoup" id="Q3BBX8">
    <property type="interactions" value="72"/>
</dbReference>
<dbReference type="STRING" id="99883.ENSTNIP00000015962"/>
<dbReference type="GlyCosmos" id="Q3BBX8">
    <property type="glycosylation" value="1 site, No reported glycans"/>
</dbReference>
<dbReference type="KEGG" id="tng:GSTEN00024318G001"/>
<dbReference type="HOGENOM" id="CLU_021386_0_0_1"/>
<dbReference type="InParanoid" id="Q3BBX8"/>
<dbReference type="OrthoDB" id="534912at2759"/>
<dbReference type="Proteomes" id="UP000007303">
    <property type="component" value="Unassembled WGS sequence"/>
</dbReference>
<dbReference type="GO" id="GO:0016323">
    <property type="term" value="C:basolateral plasma membrane"/>
    <property type="evidence" value="ECO:0007669"/>
    <property type="project" value="UniProtKB-SubCell"/>
</dbReference>
<dbReference type="GO" id="GO:0030659">
    <property type="term" value="C:cytoplasmic vesicle membrane"/>
    <property type="evidence" value="ECO:0007669"/>
    <property type="project" value="UniProtKB-SubCell"/>
</dbReference>
<dbReference type="GO" id="GO:0008519">
    <property type="term" value="F:ammonium channel activity"/>
    <property type="evidence" value="ECO:0007669"/>
    <property type="project" value="InterPro"/>
</dbReference>
<dbReference type="GO" id="GO:0097272">
    <property type="term" value="P:ammonium homeostasis"/>
    <property type="evidence" value="ECO:0007669"/>
    <property type="project" value="TreeGrafter"/>
</dbReference>
<dbReference type="FunFam" id="1.10.3430.10:FF:000001">
    <property type="entry name" value="Ammonium transporter Rh type C"/>
    <property type="match status" value="1"/>
</dbReference>
<dbReference type="Gene3D" id="1.10.3430.10">
    <property type="entry name" value="Ammonium transporter AmtB like domains"/>
    <property type="match status" value="1"/>
</dbReference>
<dbReference type="InterPro" id="IPR029020">
    <property type="entry name" value="Ammonium/urea_transptr"/>
</dbReference>
<dbReference type="InterPro" id="IPR024041">
    <property type="entry name" value="NH4_transpt_AmtB-like_dom"/>
</dbReference>
<dbReference type="InterPro" id="IPR002229">
    <property type="entry name" value="RhesusRHD"/>
</dbReference>
<dbReference type="PANTHER" id="PTHR11730">
    <property type="entry name" value="AMMONIUM TRANSPORTER"/>
    <property type="match status" value="1"/>
</dbReference>
<dbReference type="PANTHER" id="PTHR11730:SF42">
    <property type="entry name" value="AMMONIUM TRANSPORTER RH TYPE B"/>
    <property type="match status" value="1"/>
</dbReference>
<dbReference type="Pfam" id="PF00909">
    <property type="entry name" value="Ammonium_transp"/>
    <property type="match status" value="1"/>
</dbReference>
<dbReference type="PRINTS" id="PR00342">
    <property type="entry name" value="RHESUSRHD"/>
</dbReference>
<dbReference type="SUPFAM" id="SSF111352">
    <property type="entry name" value="Ammonium transporter"/>
    <property type="match status" value="1"/>
</dbReference>
<gene>
    <name type="primary">rhbg</name>
    <name type="ORF">GSTENG00024318001</name>
</gene>
<accession>Q3BBX8</accession>
<accession>Q4S471</accession>